<dbReference type="EC" id="3.6.4.12"/>
<dbReference type="EMBL" id="Z49128">
    <property type="protein sequence ID" value="CAA88960.2"/>
    <property type="molecule type" value="Genomic_DNA"/>
</dbReference>
<dbReference type="EMBL" id="AL021171">
    <property type="protein sequence ID" value="CAA88960.2"/>
    <property type="status" value="JOINED"/>
    <property type="molecule type" value="Genomic_DNA"/>
</dbReference>
<dbReference type="PIR" id="T23046">
    <property type="entry name" value="T23046"/>
</dbReference>
<dbReference type="SMR" id="G5EDG2"/>
<dbReference type="BioGRID" id="41654">
    <property type="interactions" value="9"/>
</dbReference>
<dbReference type="FunCoup" id="G5EDG2">
    <property type="interactions" value="3578"/>
</dbReference>
<dbReference type="STRING" id="6239.M03C11.8.1"/>
<dbReference type="PaxDb" id="6239-M03C11.8"/>
<dbReference type="PeptideAtlas" id="G5EDG2"/>
<dbReference type="EnsemblMetazoa" id="M03C11.8.1">
    <property type="protein sequence ID" value="M03C11.8.1"/>
    <property type="gene ID" value="WBGene00010845"/>
</dbReference>
<dbReference type="KEGG" id="cel:CELE_M03C11.8"/>
<dbReference type="AGR" id="WB:WBGene00010845"/>
<dbReference type="CTD" id="176462"/>
<dbReference type="WormBase" id="M03C11.8">
    <property type="protein sequence ID" value="CE34059"/>
    <property type="gene ID" value="WBGene00010845"/>
    <property type="gene designation" value="smrd-1"/>
</dbReference>
<dbReference type="eggNOG" id="KOG0389">
    <property type="taxonomic scope" value="Eukaryota"/>
</dbReference>
<dbReference type="GeneTree" id="ENSGT00910000144252"/>
<dbReference type="HOGENOM" id="CLU_000315_16_4_1"/>
<dbReference type="InParanoid" id="G5EDG2"/>
<dbReference type="OMA" id="TIENWIG"/>
<dbReference type="OrthoDB" id="448448at2759"/>
<dbReference type="PhylomeDB" id="G5EDG2"/>
<dbReference type="PRO" id="PR:G5EDG2"/>
<dbReference type="Proteomes" id="UP000001940">
    <property type="component" value="Chromosome III"/>
</dbReference>
<dbReference type="Bgee" id="WBGene00010845">
    <property type="expression patterns" value="Expressed in germ line (C elegans) and 4 other cell types or tissues"/>
</dbReference>
<dbReference type="GO" id="GO:0000785">
    <property type="term" value="C:chromatin"/>
    <property type="evidence" value="ECO:0000318"/>
    <property type="project" value="GO_Central"/>
</dbReference>
<dbReference type="GO" id="GO:0005634">
    <property type="term" value="C:nucleus"/>
    <property type="evidence" value="ECO:0000318"/>
    <property type="project" value="GO_Central"/>
</dbReference>
<dbReference type="GO" id="GO:0005524">
    <property type="term" value="F:ATP binding"/>
    <property type="evidence" value="ECO:0007669"/>
    <property type="project" value="UniProtKB-KW"/>
</dbReference>
<dbReference type="GO" id="GO:0016887">
    <property type="term" value="F:ATP hydrolysis activity"/>
    <property type="evidence" value="ECO:0007669"/>
    <property type="project" value="RHEA"/>
</dbReference>
<dbReference type="GO" id="GO:0003682">
    <property type="term" value="F:chromatin binding"/>
    <property type="evidence" value="ECO:0000318"/>
    <property type="project" value="GO_Central"/>
</dbReference>
<dbReference type="GO" id="GO:0003677">
    <property type="term" value="F:DNA binding"/>
    <property type="evidence" value="ECO:0000318"/>
    <property type="project" value="GO_Central"/>
</dbReference>
<dbReference type="GO" id="GO:0004386">
    <property type="term" value="F:helicase activity"/>
    <property type="evidence" value="ECO:0007669"/>
    <property type="project" value="UniProtKB-KW"/>
</dbReference>
<dbReference type="GO" id="GO:0140750">
    <property type="term" value="F:nucleosome array spacer activity"/>
    <property type="evidence" value="ECO:0000318"/>
    <property type="project" value="GO_Central"/>
</dbReference>
<dbReference type="GO" id="GO:0000729">
    <property type="term" value="P:DNA double-strand break processing"/>
    <property type="evidence" value="ECO:0000318"/>
    <property type="project" value="GO_Central"/>
</dbReference>
<dbReference type="GO" id="GO:0045944">
    <property type="term" value="P:positive regulation of transcription by RNA polymerase II"/>
    <property type="evidence" value="ECO:0000318"/>
    <property type="project" value="GO_Central"/>
</dbReference>
<dbReference type="CDD" id="cd17998">
    <property type="entry name" value="DEXHc_SMARCAD1"/>
    <property type="match status" value="1"/>
</dbReference>
<dbReference type="CDD" id="cd18793">
    <property type="entry name" value="SF2_C_SNF"/>
    <property type="match status" value="1"/>
</dbReference>
<dbReference type="FunFam" id="3.40.50.10810:FF:000014">
    <property type="entry name" value="SWI/SNF-related matrix-associated actin-dependent regulator of chromatin subfamily A containing DEAD/H box 1"/>
    <property type="match status" value="1"/>
</dbReference>
<dbReference type="Gene3D" id="3.40.50.300">
    <property type="entry name" value="P-loop containing nucleotide triphosphate hydrolases"/>
    <property type="match status" value="1"/>
</dbReference>
<dbReference type="Gene3D" id="3.40.50.10810">
    <property type="entry name" value="Tandem AAA-ATPase domain"/>
    <property type="match status" value="1"/>
</dbReference>
<dbReference type="InterPro" id="IPR014001">
    <property type="entry name" value="Helicase_ATP-bd"/>
</dbReference>
<dbReference type="InterPro" id="IPR001650">
    <property type="entry name" value="Helicase_C-like"/>
</dbReference>
<dbReference type="InterPro" id="IPR027417">
    <property type="entry name" value="P-loop_NTPase"/>
</dbReference>
<dbReference type="InterPro" id="IPR038718">
    <property type="entry name" value="SNF2-like_sf"/>
</dbReference>
<dbReference type="InterPro" id="IPR049730">
    <property type="entry name" value="SNF2/RAD54-like_C"/>
</dbReference>
<dbReference type="InterPro" id="IPR000330">
    <property type="entry name" value="SNF2_N"/>
</dbReference>
<dbReference type="PANTHER" id="PTHR10799">
    <property type="entry name" value="SNF2/RAD54 HELICASE FAMILY"/>
    <property type="match status" value="1"/>
</dbReference>
<dbReference type="Pfam" id="PF00271">
    <property type="entry name" value="Helicase_C"/>
    <property type="match status" value="1"/>
</dbReference>
<dbReference type="Pfam" id="PF00176">
    <property type="entry name" value="SNF2-rel_dom"/>
    <property type="match status" value="1"/>
</dbReference>
<dbReference type="SMART" id="SM00487">
    <property type="entry name" value="DEXDc"/>
    <property type="match status" value="1"/>
</dbReference>
<dbReference type="SMART" id="SM00490">
    <property type="entry name" value="HELICc"/>
    <property type="match status" value="1"/>
</dbReference>
<dbReference type="SUPFAM" id="SSF52540">
    <property type="entry name" value="P-loop containing nucleoside triphosphate hydrolases"/>
    <property type="match status" value="2"/>
</dbReference>
<dbReference type="PROSITE" id="PS51192">
    <property type="entry name" value="HELICASE_ATP_BIND_1"/>
    <property type="match status" value="1"/>
</dbReference>
<dbReference type="PROSITE" id="PS51194">
    <property type="entry name" value="HELICASE_CTER"/>
    <property type="match status" value="1"/>
</dbReference>
<feature type="chain" id="PRO_0000420487" description="SWI/SNF-related matrix-associated actin-dependent regulator of chromatin subfamily A containing DEAD/H box 1 homolog">
    <location>
        <begin position="1"/>
        <end position="989"/>
    </location>
</feature>
<feature type="domain" description="Helicase ATP-binding" evidence="2">
    <location>
        <begin position="406"/>
        <end position="574"/>
    </location>
</feature>
<feature type="domain" description="Helicase C-terminal" evidence="3">
    <location>
        <begin position="757"/>
        <end position="912"/>
    </location>
</feature>
<feature type="region of interest" description="Disordered" evidence="4">
    <location>
        <begin position="1"/>
        <end position="288"/>
    </location>
</feature>
<feature type="region of interest" description="Disordered" evidence="4">
    <location>
        <begin position="941"/>
        <end position="989"/>
    </location>
</feature>
<feature type="short sequence motif" description="DEGH box">
    <location>
        <begin position="525"/>
        <end position="528"/>
    </location>
</feature>
<feature type="compositionally biased region" description="Acidic residues" evidence="4">
    <location>
        <begin position="72"/>
        <end position="105"/>
    </location>
</feature>
<feature type="compositionally biased region" description="Basic residues" evidence="4">
    <location>
        <begin position="109"/>
        <end position="120"/>
    </location>
</feature>
<feature type="compositionally biased region" description="Basic and acidic residues" evidence="4">
    <location>
        <begin position="124"/>
        <end position="140"/>
    </location>
</feature>
<feature type="compositionally biased region" description="Acidic residues" evidence="4">
    <location>
        <begin position="187"/>
        <end position="200"/>
    </location>
</feature>
<feature type="compositionally biased region" description="Basic and acidic residues" evidence="4">
    <location>
        <begin position="201"/>
        <end position="221"/>
    </location>
</feature>
<feature type="compositionally biased region" description="Basic and acidic residues" evidence="4">
    <location>
        <begin position="241"/>
        <end position="250"/>
    </location>
</feature>
<feature type="compositionally biased region" description="Acidic residues" evidence="4">
    <location>
        <begin position="251"/>
        <end position="276"/>
    </location>
</feature>
<feature type="compositionally biased region" description="Basic and acidic residues" evidence="4">
    <location>
        <begin position="277"/>
        <end position="288"/>
    </location>
</feature>
<feature type="compositionally biased region" description="Basic and acidic residues" evidence="4">
    <location>
        <begin position="950"/>
        <end position="982"/>
    </location>
</feature>
<feature type="binding site" evidence="2">
    <location>
        <begin position="419"/>
        <end position="426"/>
    </location>
    <ligand>
        <name>ATP</name>
        <dbReference type="ChEBI" id="CHEBI:30616"/>
    </ligand>
</feature>
<proteinExistence type="inferred from homology"/>
<name>SMRCD_CAEEL</name>
<organism>
    <name type="scientific">Caenorhabditis elegans</name>
    <dbReference type="NCBI Taxonomy" id="6239"/>
    <lineage>
        <taxon>Eukaryota</taxon>
        <taxon>Metazoa</taxon>
        <taxon>Ecdysozoa</taxon>
        <taxon>Nematoda</taxon>
        <taxon>Chromadorea</taxon>
        <taxon>Rhabditida</taxon>
        <taxon>Rhabditina</taxon>
        <taxon>Rhabditomorpha</taxon>
        <taxon>Rhabditoidea</taxon>
        <taxon>Rhabditidae</taxon>
        <taxon>Peloderinae</taxon>
        <taxon>Caenorhabditis</taxon>
    </lineage>
</organism>
<reference key="1">
    <citation type="journal article" date="1998" name="Science">
        <title>Genome sequence of the nematode C. elegans: a platform for investigating biology.</title>
        <authorList>
            <consortium name="The C. elegans sequencing consortium"/>
        </authorList>
    </citation>
    <scope>NUCLEOTIDE SEQUENCE [LARGE SCALE GENOMIC DNA]</scope>
    <source>
        <strain>Bristol N2</strain>
    </source>
</reference>
<sequence length="989" mass="113046">MSTTSDFQTGERVRVAHQGNPQSSSLQADMDAKKALLSQNLNNGHLTARPPRTTGPGIKYGEKKPKKQKGSDDDDEDYVDETMPSEDEEDFDNNEEDEDDDDYEEEGPRKRKAPSKKKLVYPRENYRREDSETPEPEMKRIRTLSDSSDDEWMTKPRLNGSESPIGNVMRTQMAKRSAASKRKIVIDDESEDDFINDEEISEKGSGKGSEKEESEGSGKDSETEEVTMKQGQSLKAAMAKAQKEQKKKAESDEDWEEDEDDMNADGDETPSDDSDIEERRAKRGETKNQKECREFFNKAKKEDLLQQARINDKIADFVLANRPFEIYGAMVAKMKGVTRGTNAIEAYMEFLEKRGILSRILDDCKDHAHTVTKDFERCTEGPLQLPLLKEGCTLHDYQLIGVKWLIMMYNKDLNAILGDEMGLGKTIQIVAFLSYLKQIGKTGPHLIVVPSSTIENWIGEFHKWCPSIQLLTYYGSQDERKHLRHRVKKQKDHIDVILTTYNMVTSKSDDKKFFKNFSLNYVIYDEGHMLKNCDSERYRGLMKVKGKKKILLTGTPLQNNLIELISLMYFVLSKVFNKYCEDITHLLQHFKQLGPALDTKNKALYQQDRIEEAKAILQPYILRRLKNQVLGSLPSKSEQIIEVEMKKPQKQLYDNIVEALQQSEESGDSYGSLMRLRQAANHPLLRRSEYTDQKLDKIAKMLCLREKAYADKKWQHVSEDLAWLSDIKIHQLCERFRCTSKFLLNEQLALKSGKCEQLDVMLPEIQKKGDKVLIFSQFTSMLDILEVYLNIRGYSYKRLDGQTPVLDRQEMINEFNLSKDLFVFLLSTRAGGLGINLTSANHIIIHDIDFNPYNDKQAEDRCHRMGQEKPVHVTRLVSKGTVEVGMLALAKKKLQLEKQVTDGVKGQLDEDALRELKEEEGGEQCGGRDLSKLLSSAISGRYDDVEDDSGDSKNGIDAEEAAKKEDEAVKEPVEKEQQKEEESQPSTSA</sequence>
<comment type="function">
    <text evidence="1">DNA helicase that possesses intrinsic ATP-dependent nucleosome-remodeling activity and is both required for DNA repair and heterochromatin organization. Promotes DNA end resection of double-strand breaks (DSBs) following DNA damage: probably acts by weakening histone DNA interactions in nucleosomes flanking DSBs (By similarity).</text>
</comment>
<comment type="catalytic activity">
    <reaction evidence="1">
        <text>ATP + H2O = ADP + phosphate + H(+)</text>
        <dbReference type="Rhea" id="RHEA:13065"/>
        <dbReference type="ChEBI" id="CHEBI:15377"/>
        <dbReference type="ChEBI" id="CHEBI:15378"/>
        <dbReference type="ChEBI" id="CHEBI:30616"/>
        <dbReference type="ChEBI" id="CHEBI:43474"/>
        <dbReference type="ChEBI" id="CHEBI:456216"/>
        <dbReference type="EC" id="3.6.4.12"/>
    </reaction>
    <physiologicalReaction direction="left-to-right" evidence="1">
        <dbReference type="Rhea" id="RHEA:13066"/>
    </physiologicalReaction>
</comment>
<comment type="subcellular location">
    <subcellularLocation>
        <location evidence="1">Nucleus</location>
    </subcellularLocation>
    <subcellularLocation>
        <location evidence="1">Chromosome</location>
    </subcellularLocation>
</comment>
<comment type="similarity">
    <text evidence="5">Belongs to the SNF2/RAD54 helicase family.</text>
</comment>
<protein>
    <recommendedName>
        <fullName>SWI/SNF-related matrix-associated actin-dependent regulator of chromatin subfamily A containing DEAD/H box 1 homolog</fullName>
        <ecNumber>3.6.4.12</ecNumber>
    </recommendedName>
</protein>
<accession>G5EDG2</accession>
<keyword id="KW-0067">ATP-binding</keyword>
<keyword id="KW-0156">Chromatin regulator</keyword>
<keyword id="KW-0158">Chromosome</keyword>
<keyword id="KW-0227">DNA damage</keyword>
<keyword id="KW-0234">DNA repair</keyword>
<keyword id="KW-0238">DNA-binding</keyword>
<keyword id="KW-0347">Helicase</keyword>
<keyword id="KW-0378">Hydrolase</keyword>
<keyword id="KW-0547">Nucleotide-binding</keyword>
<keyword id="KW-0539">Nucleus</keyword>
<keyword id="KW-1185">Reference proteome</keyword>
<gene>
    <name evidence="6" type="primary">smrd-1</name>
    <name type="ORF">M03C11.8</name>
</gene>
<evidence type="ECO:0000250" key="1">
    <source>
        <dbReference type="UniProtKB" id="Q9H4L7"/>
    </source>
</evidence>
<evidence type="ECO:0000255" key="2">
    <source>
        <dbReference type="PROSITE-ProRule" id="PRU00541"/>
    </source>
</evidence>
<evidence type="ECO:0000255" key="3">
    <source>
        <dbReference type="PROSITE-ProRule" id="PRU00542"/>
    </source>
</evidence>
<evidence type="ECO:0000256" key="4">
    <source>
        <dbReference type="SAM" id="MobiDB-lite"/>
    </source>
</evidence>
<evidence type="ECO:0000305" key="5"/>
<evidence type="ECO:0000312" key="6">
    <source>
        <dbReference type="WormBase" id="M03C11.8"/>
    </source>
</evidence>